<accession>Q6NHM7</accession>
<feature type="chain" id="PRO_0000083795" description="3-isopropylmalate dehydrogenase">
    <location>
        <begin position="1"/>
        <end position="339"/>
    </location>
</feature>
<feature type="binding site" evidence="1">
    <location>
        <position position="88"/>
    </location>
    <ligand>
        <name>substrate</name>
    </ligand>
</feature>
<feature type="binding site" evidence="1">
    <location>
        <position position="98"/>
    </location>
    <ligand>
        <name>substrate</name>
    </ligand>
</feature>
<feature type="binding site" evidence="1">
    <location>
        <position position="122"/>
    </location>
    <ligand>
        <name>substrate</name>
    </ligand>
</feature>
<feature type="binding site" evidence="1">
    <location>
        <position position="212"/>
    </location>
    <ligand>
        <name>Mg(2+)</name>
        <dbReference type="ChEBI" id="CHEBI:18420"/>
    </ligand>
</feature>
<feature type="binding site" evidence="1">
    <location>
        <position position="212"/>
    </location>
    <ligand>
        <name>substrate</name>
    </ligand>
</feature>
<feature type="binding site" evidence="1">
    <location>
        <position position="236"/>
    </location>
    <ligand>
        <name>Mg(2+)</name>
        <dbReference type="ChEBI" id="CHEBI:18420"/>
    </ligand>
</feature>
<feature type="binding site" evidence="1">
    <location>
        <position position="240"/>
    </location>
    <ligand>
        <name>Mg(2+)</name>
        <dbReference type="ChEBI" id="CHEBI:18420"/>
    </ligand>
</feature>
<feature type="binding site" evidence="1">
    <location>
        <begin position="272"/>
        <end position="284"/>
    </location>
    <ligand>
        <name>NAD(+)</name>
        <dbReference type="ChEBI" id="CHEBI:57540"/>
    </ligand>
</feature>
<feature type="site" description="Important for catalysis" evidence="1">
    <location>
        <position position="129"/>
    </location>
</feature>
<feature type="site" description="Important for catalysis" evidence="1">
    <location>
        <position position="179"/>
    </location>
</feature>
<proteinExistence type="inferred from homology"/>
<dbReference type="EC" id="1.1.1.85" evidence="1"/>
<dbReference type="EMBL" id="BX248357">
    <property type="protein sequence ID" value="CAE49628.1"/>
    <property type="molecule type" value="Genomic_DNA"/>
</dbReference>
<dbReference type="RefSeq" id="WP_010934811.1">
    <property type="nucleotide sequence ID" value="NC_002935.2"/>
</dbReference>
<dbReference type="SMR" id="Q6NHM7"/>
<dbReference type="STRING" id="257309.DIP1105"/>
<dbReference type="KEGG" id="cdi:DIP1105"/>
<dbReference type="HOGENOM" id="CLU_031953_0_1_11"/>
<dbReference type="UniPathway" id="UPA00048">
    <property type="reaction ID" value="UER00072"/>
</dbReference>
<dbReference type="Proteomes" id="UP000002198">
    <property type="component" value="Chromosome"/>
</dbReference>
<dbReference type="GO" id="GO:0005737">
    <property type="term" value="C:cytoplasm"/>
    <property type="evidence" value="ECO:0007669"/>
    <property type="project" value="UniProtKB-SubCell"/>
</dbReference>
<dbReference type="GO" id="GO:0003862">
    <property type="term" value="F:3-isopropylmalate dehydrogenase activity"/>
    <property type="evidence" value="ECO:0007669"/>
    <property type="project" value="UniProtKB-UniRule"/>
</dbReference>
<dbReference type="GO" id="GO:0000287">
    <property type="term" value="F:magnesium ion binding"/>
    <property type="evidence" value="ECO:0007669"/>
    <property type="project" value="InterPro"/>
</dbReference>
<dbReference type="GO" id="GO:0051287">
    <property type="term" value="F:NAD binding"/>
    <property type="evidence" value="ECO:0007669"/>
    <property type="project" value="InterPro"/>
</dbReference>
<dbReference type="GO" id="GO:0009098">
    <property type="term" value="P:L-leucine biosynthetic process"/>
    <property type="evidence" value="ECO:0007669"/>
    <property type="project" value="UniProtKB-UniRule"/>
</dbReference>
<dbReference type="Gene3D" id="3.40.718.10">
    <property type="entry name" value="Isopropylmalate Dehydrogenase"/>
    <property type="match status" value="1"/>
</dbReference>
<dbReference type="HAMAP" id="MF_01035">
    <property type="entry name" value="LeuB_type2"/>
    <property type="match status" value="1"/>
</dbReference>
<dbReference type="InterPro" id="IPR050501">
    <property type="entry name" value="ICDH/IPMDH"/>
</dbReference>
<dbReference type="InterPro" id="IPR019818">
    <property type="entry name" value="IsoCit/isopropylmalate_DH_CS"/>
</dbReference>
<dbReference type="InterPro" id="IPR024084">
    <property type="entry name" value="IsoPropMal-DH-like_dom"/>
</dbReference>
<dbReference type="InterPro" id="IPR023698">
    <property type="entry name" value="LeuB_actb"/>
</dbReference>
<dbReference type="NCBIfam" id="NF002898">
    <property type="entry name" value="PRK03437.1"/>
    <property type="match status" value="1"/>
</dbReference>
<dbReference type="PANTHER" id="PTHR43275">
    <property type="entry name" value="D-MALATE DEHYDROGENASE [DECARBOXYLATING]"/>
    <property type="match status" value="1"/>
</dbReference>
<dbReference type="PANTHER" id="PTHR43275:SF1">
    <property type="entry name" value="D-MALATE DEHYDROGENASE [DECARBOXYLATING]"/>
    <property type="match status" value="1"/>
</dbReference>
<dbReference type="Pfam" id="PF00180">
    <property type="entry name" value="Iso_dh"/>
    <property type="match status" value="1"/>
</dbReference>
<dbReference type="SMART" id="SM01329">
    <property type="entry name" value="Iso_dh"/>
    <property type="match status" value="1"/>
</dbReference>
<dbReference type="SUPFAM" id="SSF53659">
    <property type="entry name" value="Isocitrate/Isopropylmalate dehydrogenase-like"/>
    <property type="match status" value="1"/>
</dbReference>
<dbReference type="PROSITE" id="PS00470">
    <property type="entry name" value="IDH_IMDH"/>
    <property type="match status" value="1"/>
</dbReference>
<gene>
    <name evidence="1" type="primary">leuB</name>
    <name type="ordered locus">DIP1105</name>
</gene>
<organism>
    <name type="scientific">Corynebacterium diphtheriae (strain ATCC 700971 / NCTC 13129 / Biotype gravis)</name>
    <dbReference type="NCBI Taxonomy" id="257309"/>
    <lineage>
        <taxon>Bacteria</taxon>
        <taxon>Bacillati</taxon>
        <taxon>Actinomycetota</taxon>
        <taxon>Actinomycetes</taxon>
        <taxon>Mycobacteriales</taxon>
        <taxon>Corynebacteriaceae</taxon>
        <taxon>Corynebacterium</taxon>
    </lineage>
</organism>
<sequence>MKLAVIGGDGIGPEVTAEALKVLNAVRDDIEVTDYDLGARRYLRNGELLADADLVSLREHDAILLGAIGAPGEVPPGVLERGLLLKMRFALDHHVNLRPSKLYPTATSPLANPGDIDFVVVREGTEGLYCGNGGTLREGTPHEIASEVSQNTRYGVERVVRDAFERAQNRKKHLTLVHKTNVLVNAGGLWQRTVNEIATEYPEVTVDYNHIDAATIYMVTDPSRYDVIVTDNLFGDILTDLAGAVTGGIGLAASGNIDATGVNPSMFEPVHGSAPDIAGQGIADPTAAILSAAMLLRHVGDESNAQRIEAAVTYDVAERPAGPVKTVEVGDRIVAALQR</sequence>
<name>LEU3_CORDI</name>
<comment type="function">
    <text evidence="1">Catalyzes the oxidation of 3-carboxy-2-hydroxy-4-methylpentanoate (3-isopropylmalate) to 3-carboxy-4-methyl-2-oxopentanoate. The product decarboxylates to 4-methyl-2 oxopentanoate.</text>
</comment>
<comment type="catalytic activity">
    <reaction evidence="1">
        <text>(2R,3S)-3-isopropylmalate + NAD(+) = 4-methyl-2-oxopentanoate + CO2 + NADH</text>
        <dbReference type="Rhea" id="RHEA:32271"/>
        <dbReference type="ChEBI" id="CHEBI:16526"/>
        <dbReference type="ChEBI" id="CHEBI:17865"/>
        <dbReference type="ChEBI" id="CHEBI:35121"/>
        <dbReference type="ChEBI" id="CHEBI:57540"/>
        <dbReference type="ChEBI" id="CHEBI:57945"/>
        <dbReference type="EC" id="1.1.1.85"/>
    </reaction>
</comment>
<comment type="cofactor">
    <cofactor evidence="1">
        <name>Mg(2+)</name>
        <dbReference type="ChEBI" id="CHEBI:18420"/>
    </cofactor>
    <cofactor evidence="1">
        <name>Mn(2+)</name>
        <dbReference type="ChEBI" id="CHEBI:29035"/>
    </cofactor>
    <text evidence="1">Binds 1 Mg(2+) or Mn(2+) ion per subunit.</text>
</comment>
<comment type="pathway">
    <text evidence="1">Amino-acid biosynthesis; L-leucine biosynthesis; L-leucine from 3-methyl-2-oxobutanoate: step 3/4.</text>
</comment>
<comment type="subunit">
    <text evidence="1">Homodimer.</text>
</comment>
<comment type="subcellular location">
    <subcellularLocation>
        <location evidence="1">Cytoplasm</location>
    </subcellularLocation>
</comment>
<comment type="similarity">
    <text evidence="1">Belongs to the isocitrate and isopropylmalate dehydrogenases family. LeuB type 2 subfamily.</text>
</comment>
<evidence type="ECO:0000255" key="1">
    <source>
        <dbReference type="HAMAP-Rule" id="MF_01035"/>
    </source>
</evidence>
<keyword id="KW-0028">Amino-acid biosynthesis</keyword>
<keyword id="KW-0100">Branched-chain amino acid biosynthesis</keyword>
<keyword id="KW-0963">Cytoplasm</keyword>
<keyword id="KW-0432">Leucine biosynthesis</keyword>
<keyword id="KW-0460">Magnesium</keyword>
<keyword id="KW-0464">Manganese</keyword>
<keyword id="KW-0479">Metal-binding</keyword>
<keyword id="KW-0520">NAD</keyword>
<keyword id="KW-0560">Oxidoreductase</keyword>
<keyword id="KW-1185">Reference proteome</keyword>
<reference key="1">
    <citation type="journal article" date="2003" name="Nucleic Acids Res.">
        <title>The complete genome sequence and analysis of Corynebacterium diphtheriae NCTC13129.</title>
        <authorList>
            <person name="Cerdeno-Tarraga A.-M."/>
            <person name="Efstratiou A."/>
            <person name="Dover L.G."/>
            <person name="Holden M.T.G."/>
            <person name="Pallen M.J."/>
            <person name="Bentley S.D."/>
            <person name="Besra G.S."/>
            <person name="Churcher C.M."/>
            <person name="James K.D."/>
            <person name="De Zoysa A."/>
            <person name="Chillingworth T."/>
            <person name="Cronin A."/>
            <person name="Dowd L."/>
            <person name="Feltwell T."/>
            <person name="Hamlin N."/>
            <person name="Holroyd S."/>
            <person name="Jagels K."/>
            <person name="Moule S."/>
            <person name="Quail M.A."/>
            <person name="Rabbinowitsch E."/>
            <person name="Rutherford K.M."/>
            <person name="Thomson N.R."/>
            <person name="Unwin L."/>
            <person name="Whitehead S."/>
            <person name="Barrell B.G."/>
            <person name="Parkhill J."/>
        </authorList>
    </citation>
    <scope>NUCLEOTIDE SEQUENCE [LARGE SCALE GENOMIC DNA]</scope>
    <source>
        <strain>ATCC 700971 / NCTC 13129 / Biotype gravis</strain>
    </source>
</reference>
<protein>
    <recommendedName>
        <fullName evidence="1">3-isopropylmalate dehydrogenase</fullName>
        <ecNumber evidence="1">1.1.1.85</ecNumber>
    </recommendedName>
    <alternativeName>
        <fullName evidence="1">3-IPM-DH</fullName>
    </alternativeName>
    <alternativeName>
        <fullName evidence="1">Beta-IPM dehydrogenase</fullName>
        <shortName evidence="1">IMDH</shortName>
    </alternativeName>
</protein>